<feature type="chain" id="PRO_0000322510" description="V-type ATP synthase subunit E">
    <location>
        <begin position="1"/>
        <end position="199"/>
    </location>
</feature>
<gene>
    <name evidence="1" type="primary">atpE</name>
    <name type="ordered locus">BG0097</name>
</gene>
<keyword id="KW-0066">ATP synthesis</keyword>
<keyword id="KW-0375">Hydrogen ion transport</keyword>
<keyword id="KW-0406">Ion transport</keyword>
<keyword id="KW-0813">Transport</keyword>
<protein>
    <recommendedName>
        <fullName>V-type ATP synthase subunit E</fullName>
    </recommendedName>
    <alternativeName>
        <fullName evidence="1">V-ATPase subunit E</fullName>
    </alternativeName>
</protein>
<sequence length="199" mass="22832">MQFEVKDLINKIKKDGLEEAERISNDIIFKAKKEAEEIVARAEEAVGALKAKSEKEINDYKRHALEASRQAIRDLIIGVEKNLKSLFENTLKDNVAEVFSDNDFLSELIIKITDSWIKEEKLVIQLNESDFSGLEQILRLKLGNKLKEGIEIKPFKGISKGFKIQKKNTGLQYDFSVETIADILFDYLNPRFKEVIKVV</sequence>
<dbReference type="EMBL" id="CP000013">
    <property type="protein sequence ID" value="AAU06955.1"/>
    <property type="molecule type" value="Genomic_DNA"/>
</dbReference>
<dbReference type="RefSeq" id="WP_011193449.1">
    <property type="nucleotide sequence ID" value="NZ_CP028872.1"/>
</dbReference>
<dbReference type="SMR" id="Q662R6"/>
<dbReference type="GeneID" id="45160892"/>
<dbReference type="KEGG" id="bga:BG0097"/>
<dbReference type="eggNOG" id="COG1390">
    <property type="taxonomic scope" value="Bacteria"/>
</dbReference>
<dbReference type="HOGENOM" id="CLU_105793_0_1_12"/>
<dbReference type="OrthoDB" id="1771105at2"/>
<dbReference type="Proteomes" id="UP000002276">
    <property type="component" value="Chromosome"/>
</dbReference>
<dbReference type="GO" id="GO:0033178">
    <property type="term" value="C:proton-transporting two-sector ATPase complex, catalytic domain"/>
    <property type="evidence" value="ECO:0007669"/>
    <property type="project" value="InterPro"/>
</dbReference>
<dbReference type="GO" id="GO:0005524">
    <property type="term" value="F:ATP binding"/>
    <property type="evidence" value="ECO:0007669"/>
    <property type="project" value="UniProtKB-UniRule"/>
</dbReference>
<dbReference type="GO" id="GO:0046933">
    <property type="term" value="F:proton-transporting ATP synthase activity, rotational mechanism"/>
    <property type="evidence" value="ECO:0007669"/>
    <property type="project" value="UniProtKB-UniRule"/>
</dbReference>
<dbReference type="GO" id="GO:0046961">
    <property type="term" value="F:proton-transporting ATPase activity, rotational mechanism"/>
    <property type="evidence" value="ECO:0007669"/>
    <property type="project" value="InterPro"/>
</dbReference>
<dbReference type="GO" id="GO:0042777">
    <property type="term" value="P:proton motive force-driven plasma membrane ATP synthesis"/>
    <property type="evidence" value="ECO:0007669"/>
    <property type="project" value="UniProtKB-UniRule"/>
</dbReference>
<dbReference type="HAMAP" id="MF_00311">
    <property type="entry name" value="ATP_synth_E_arch"/>
    <property type="match status" value="1"/>
</dbReference>
<dbReference type="InterPro" id="IPR002842">
    <property type="entry name" value="ATPase_V1_Esu"/>
</dbReference>
<dbReference type="NCBIfam" id="NF002424">
    <property type="entry name" value="PRK01558.1"/>
    <property type="match status" value="1"/>
</dbReference>
<proteinExistence type="inferred from homology"/>
<reference key="1">
    <citation type="journal article" date="2004" name="Nucleic Acids Res.">
        <title>Comparative analysis of the Borrelia garinii genome.</title>
        <authorList>
            <person name="Gloeckner G."/>
            <person name="Lehmann R."/>
            <person name="Romualdi A."/>
            <person name="Pradella S."/>
            <person name="Schulte-Spechtel U."/>
            <person name="Schilhabel M."/>
            <person name="Wilske B."/>
            <person name="Suehnel J."/>
            <person name="Platzer M."/>
        </authorList>
    </citation>
    <scope>NUCLEOTIDE SEQUENCE [LARGE SCALE GENOMIC DNA]</scope>
    <source>
        <strain>ATCC BAA-2496 / DSM 23469 / PBi</strain>
    </source>
</reference>
<comment type="function">
    <text evidence="1">Produces ATP from ADP in the presence of a proton gradient across the membrane.</text>
</comment>
<comment type="similarity">
    <text evidence="1">Belongs to the V-ATPase E subunit family.</text>
</comment>
<organism>
    <name type="scientific">Borrelia garinii subsp. bavariensis (strain ATCC BAA-2496 / DSM 23469 / PBi)</name>
    <name type="common">Borreliella bavariensis</name>
    <dbReference type="NCBI Taxonomy" id="290434"/>
    <lineage>
        <taxon>Bacteria</taxon>
        <taxon>Pseudomonadati</taxon>
        <taxon>Spirochaetota</taxon>
        <taxon>Spirochaetia</taxon>
        <taxon>Spirochaetales</taxon>
        <taxon>Borreliaceae</taxon>
        <taxon>Borreliella</taxon>
    </lineage>
</organism>
<accession>Q662R6</accession>
<evidence type="ECO:0000255" key="1">
    <source>
        <dbReference type="HAMAP-Rule" id="MF_00311"/>
    </source>
</evidence>
<name>VATE_BORGP</name>